<keyword id="KW-1003">Cell membrane</keyword>
<keyword id="KW-1015">Disulfide bond</keyword>
<keyword id="KW-0297">G-protein coupled receptor</keyword>
<keyword id="KW-0325">Glycoprotein</keyword>
<keyword id="KW-0472">Membrane</keyword>
<keyword id="KW-0552">Olfaction</keyword>
<keyword id="KW-0675">Receptor</keyword>
<keyword id="KW-1185">Reference proteome</keyword>
<keyword id="KW-0716">Sensory transduction</keyword>
<keyword id="KW-0807">Transducer</keyword>
<keyword id="KW-0812">Transmembrane</keyword>
<keyword id="KW-1133">Transmembrane helix</keyword>
<reference key="1">
    <citation type="submission" date="2001-07" db="EMBL/GenBank/DDBJ databases">
        <title>Genome-wide discovery and analysis of human seven transmembrane helix receptor genes.</title>
        <authorList>
            <person name="Suwa M."/>
            <person name="Sato T."/>
            <person name="Okouchi I."/>
            <person name="Arita M."/>
            <person name="Futami K."/>
            <person name="Matsumoto S."/>
            <person name="Tsutsumi S."/>
            <person name="Aburatani H."/>
            <person name="Asai K."/>
            <person name="Akiyama Y."/>
        </authorList>
    </citation>
    <scope>NUCLEOTIDE SEQUENCE [GENOMIC DNA]</scope>
</reference>
<reference key="2">
    <citation type="journal article" date="2005" name="Nature">
        <title>The DNA sequence of the human X chromosome.</title>
        <authorList>
            <person name="Ross M.T."/>
            <person name="Grafham D.V."/>
            <person name="Coffey A.J."/>
            <person name="Scherer S."/>
            <person name="McLay K."/>
            <person name="Muzny D."/>
            <person name="Platzer M."/>
            <person name="Howell G.R."/>
            <person name="Burrows C."/>
            <person name="Bird C.P."/>
            <person name="Frankish A."/>
            <person name="Lovell F.L."/>
            <person name="Howe K.L."/>
            <person name="Ashurst J.L."/>
            <person name="Fulton R.S."/>
            <person name="Sudbrak R."/>
            <person name="Wen G."/>
            <person name="Jones M.C."/>
            <person name="Hurles M.E."/>
            <person name="Andrews T.D."/>
            <person name="Scott C.E."/>
            <person name="Searle S."/>
            <person name="Ramser J."/>
            <person name="Whittaker A."/>
            <person name="Deadman R."/>
            <person name="Carter N.P."/>
            <person name="Hunt S.E."/>
            <person name="Chen R."/>
            <person name="Cree A."/>
            <person name="Gunaratne P."/>
            <person name="Havlak P."/>
            <person name="Hodgson A."/>
            <person name="Metzker M.L."/>
            <person name="Richards S."/>
            <person name="Scott G."/>
            <person name="Steffen D."/>
            <person name="Sodergren E."/>
            <person name="Wheeler D.A."/>
            <person name="Worley K.C."/>
            <person name="Ainscough R."/>
            <person name="Ambrose K.D."/>
            <person name="Ansari-Lari M.A."/>
            <person name="Aradhya S."/>
            <person name="Ashwell R.I."/>
            <person name="Babbage A.K."/>
            <person name="Bagguley C.L."/>
            <person name="Ballabio A."/>
            <person name="Banerjee R."/>
            <person name="Barker G.E."/>
            <person name="Barlow K.F."/>
            <person name="Barrett I.P."/>
            <person name="Bates K.N."/>
            <person name="Beare D.M."/>
            <person name="Beasley H."/>
            <person name="Beasley O."/>
            <person name="Beck A."/>
            <person name="Bethel G."/>
            <person name="Blechschmidt K."/>
            <person name="Brady N."/>
            <person name="Bray-Allen S."/>
            <person name="Bridgeman A.M."/>
            <person name="Brown A.J."/>
            <person name="Brown M.J."/>
            <person name="Bonnin D."/>
            <person name="Bruford E.A."/>
            <person name="Buhay C."/>
            <person name="Burch P."/>
            <person name="Burford D."/>
            <person name="Burgess J."/>
            <person name="Burrill W."/>
            <person name="Burton J."/>
            <person name="Bye J.M."/>
            <person name="Carder C."/>
            <person name="Carrel L."/>
            <person name="Chako J."/>
            <person name="Chapman J.C."/>
            <person name="Chavez D."/>
            <person name="Chen E."/>
            <person name="Chen G."/>
            <person name="Chen Y."/>
            <person name="Chen Z."/>
            <person name="Chinault C."/>
            <person name="Ciccodicola A."/>
            <person name="Clark S.Y."/>
            <person name="Clarke G."/>
            <person name="Clee C.M."/>
            <person name="Clegg S."/>
            <person name="Clerc-Blankenburg K."/>
            <person name="Clifford K."/>
            <person name="Cobley V."/>
            <person name="Cole C.G."/>
            <person name="Conquer J.S."/>
            <person name="Corby N."/>
            <person name="Connor R.E."/>
            <person name="David R."/>
            <person name="Davies J."/>
            <person name="Davis C."/>
            <person name="Davis J."/>
            <person name="Delgado O."/>
            <person name="Deshazo D."/>
            <person name="Dhami P."/>
            <person name="Ding Y."/>
            <person name="Dinh H."/>
            <person name="Dodsworth S."/>
            <person name="Draper H."/>
            <person name="Dugan-Rocha S."/>
            <person name="Dunham A."/>
            <person name="Dunn M."/>
            <person name="Durbin K.J."/>
            <person name="Dutta I."/>
            <person name="Eades T."/>
            <person name="Ellwood M."/>
            <person name="Emery-Cohen A."/>
            <person name="Errington H."/>
            <person name="Evans K.L."/>
            <person name="Faulkner L."/>
            <person name="Francis F."/>
            <person name="Frankland J."/>
            <person name="Fraser A.E."/>
            <person name="Galgoczy P."/>
            <person name="Gilbert J."/>
            <person name="Gill R."/>
            <person name="Gloeckner G."/>
            <person name="Gregory S.G."/>
            <person name="Gribble S."/>
            <person name="Griffiths C."/>
            <person name="Grocock R."/>
            <person name="Gu Y."/>
            <person name="Gwilliam R."/>
            <person name="Hamilton C."/>
            <person name="Hart E.A."/>
            <person name="Hawes A."/>
            <person name="Heath P.D."/>
            <person name="Heitmann K."/>
            <person name="Hennig S."/>
            <person name="Hernandez J."/>
            <person name="Hinzmann B."/>
            <person name="Ho S."/>
            <person name="Hoffs M."/>
            <person name="Howden P.J."/>
            <person name="Huckle E.J."/>
            <person name="Hume J."/>
            <person name="Hunt P.J."/>
            <person name="Hunt A.R."/>
            <person name="Isherwood J."/>
            <person name="Jacob L."/>
            <person name="Johnson D."/>
            <person name="Jones S."/>
            <person name="de Jong P.J."/>
            <person name="Joseph S.S."/>
            <person name="Keenan S."/>
            <person name="Kelly S."/>
            <person name="Kershaw J.K."/>
            <person name="Khan Z."/>
            <person name="Kioschis P."/>
            <person name="Klages S."/>
            <person name="Knights A.J."/>
            <person name="Kosiura A."/>
            <person name="Kovar-Smith C."/>
            <person name="Laird G.K."/>
            <person name="Langford C."/>
            <person name="Lawlor S."/>
            <person name="Leversha M."/>
            <person name="Lewis L."/>
            <person name="Liu W."/>
            <person name="Lloyd C."/>
            <person name="Lloyd D.M."/>
            <person name="Loulseged H."/>
            <person name="Loveland J.E."/>
            <person name="Lovell J.D."/>
            <person name="Lozado R."/>
            <person name="Lu J."/>
            <person name="Lyne R."/>
            <person name="Ma J."/>
            <person name="Maheshwari M."/>
            <person name="Matthews L.H."/>
            <person name="McDowall J."/>
            <person name="McLaren S."/>
            <person name="McMurray A."/>
            <person name="Meidl P."/>
            <person name="Meitinger T."/>
            <person name="Milne S."/>
            <person name="Miner G."/>
            <person name="Mistry S.L."/>
            <person name="Morgan M."/>
            <person name="Morris S."/>
            <person name="Mueller I."/>
            <person name="Mullikin J.C."/>
            <person name="Nguyen N."/>
            <person name="Nordsiek G."/>
            <person name="Nyakatura G."/>
            <person name="O'dell C.N."/>
            <person name="Okwuonu G."/>
            <person name="Palmer S."/>
            <person name="Pandian R."/>
            <person name="Parker D."/>
            <person name="Parrish J."/>
            <person name="Pasternak S."/>
            <person name="Patel D."/>
            <person name="Pearce A.V."/>
            <person name="Pearson D.M."/>
            <person name="Pelan S.E."/>
            <person name="Perez L."/>
            <person name="Porter K.M."/>
            <person name="Ramsey Y."/>
            <person name="Reichwald K."/>
            <person name="Rhodes S."/>
            <person name="Ridler K.A."/>
            <person name="Schlessinger D."/>
            <person name="Schueler M.G."/>
            <person name="Sehra H.K."/>
            <person name="Shaw-Smith C."/>
            <person name="Shen H."/>
            <person name="Sheridan E.M."/>
            <person name="Shownkeen R."/>
            <person name="Skuce C.D."/>
            <person name="Smith M.L."/>
            <person name="Sotheran E.C."/>
            <person name="Steingruber H.E."/>
            <person name="Steward C.A."/>
            <person name="Storey R."/>
            <person name="Swann R.M."/>
            <person name="Swarbreck D."/>
            <person name="Tabor P.E."/>
            <person name="Taudien S."/>
            <person name="Taylor T."/>
            <person name="Teague B."/>
            <person name="Thomas K."/>
            <person name="Thorpe A."/>
            <person name="Timms K."/>
            <person name="Tracey A."/>
            <person name="Trevanion S."/>
            <person name="Tromans A.C."/>
            <person name="d'Urso M."/>
            <person name="Verduzco D."/>
            <person name="Villasana D."/>
            <person name="Waldron L."/>
            <person name="Wall M."/>
            <person name="Wang Q."/>
            <person name="Warren J."/>
            <person name="Warry G.L."/>
            <person name="Wei X."/>
            <person name="West A."/>
            <person name="Whitehead S.L."/>
            <person name="Whiteley M.N."/>
            <person name="Wilkinson J.E."/>
            <person name="Willey D.L."/>
            <person name="Williams G."/>
            <person name="Williams L."/>
            <person name="Williamson A."/>
            <person name="Williamson H."/>
            <person name="Wilming L."/>
            <person name="Woodmansey R.L."/>
            <person name="Wray P.W."/>
            <person name="Yen J."/>
            <person name="Zhang J."/>
            <person name="Zhou J."/>
            <person name="Zoghbi H."/>
            <person name="Zorilla S."/>
            <person name="Buck D."/>
            <person name="Reinhardt R."/>
            <person name="Poustka A."/>
            <person name="Rosenthal A."/>
            <person name="Lehrach H."/>
            <person name="Meindl A."/>
            <person name="Minx P.J."/>
            <person name="Hillier L.W."/>
            <person name="Willard H.F."/>
            <person name="Wilson R.K."/>
            <person name="Waterston R.H."/>
            <person name="Rice C.M."/>
            <person name="Vaudin M."/>
            <person name="Coulson A."/>
            <person name="Nelson D.L."/>
            <person name="Weinstock G."/>
            <person name="Sulston J.E."/>
            <person name="Durbin R.M."/>
            <person name="Hubbard T."/>
            <person name="Gibbs R.A."/>
            <person name="Beck S."/>
            <person name="Rogers J."/>
            <person name="Bentley D.R."/>
        </authorList>
    </citation>
    <scope>NUCLEOTIDE SEQUENCE [LARGE SCALE GENOMIC DNA]</scope>
</reference>
<reference key="3">
    <citation type="journal article" date="2004" name="Genome Res.">
        <title>The status, quality, and expansion of the NIH full-length cDNA project: the Mammalian Gene Collection (MGC).</title>
        <authorList>
            <consortium name="The MGC Project Team"/>
        </authorList>
    </citation>
    <scope>NUCLEOTIDE SEQUENCE [LARGE SCALE MRNA]</scope>
    <scope>VARIANT SER-266</scope>
</reference>
<reference key="4">
    <citation type="journal article" date="2002" name="Genomics">
        <title>DEFOG: a practical scheme for deciphering families of genes.</title>
        <authorList>
            <person name="Fuchs T."/>
            <person name="Malecova B."/>
            <person name="Linhart C."/>
            <person name="Sharan R."/>
            <person name="Khen M."/>
            <person name="Herwig R."/>
            <person name="Shmulevich D."/>
            <person name="Elkon R."/>
            <person name="Steinfath M."/>
            <person name="O'Brien J.K."/>
            <person name="Radelof U."/>
            <person name="Lehrach H."/>
            <person name="Lancet D."/>
            <person name="Shamir R."/>
        </authorList>
    </citation>
    <scope>NUCLEOTIDE SEQUENCE [GENOMIC DNA] OF 68-282</scope>
</reference>
<reference key="5">
    <citation type="journal article" date="2004" name="Proc. Natl. Acad. Sci. U.S.A.">
        <title>The human olfactory receptor gene family.</title>
        <authorList>
            <person name="Malnic B."/>
            <person name="Godfrey P.A."/>
            <person name="Buck L.B."/>
        </authorList>
    </citation>
    <scope>IDENTIFICATION</scope>
</reference>
<reference key="6">
    <citation type="journal article" date="2004" name="Proc. Natl. Acad. Sci. U.S.A.">
        <authorList>
            <person name="Malnic B."/>
            <person name="Godfrey P.A."/>
            <person name="Buck L.B."/>
        </authorList>
    </citation>
    <scope>ERRATUM OF PUBMED:14983052</scope>
</reference>
<accession>Q8NG92</accession>
<accession>B2RNQ3</accession>
<accession>Q6IET8</accession>
<accession>Q96R12</accession>
<protein>
    <recommendedName>
        <fullName>Olfactory receptor 13H1</fullName>
    </recommendedName>
    <alternativeName>
        <fullName>Olfactory receptor ORX-1</fullName>
    </alternativeName>
</protein>
<sequence length="308" mass="34570">MAMDNVTAVFQFLLIGISNYPQWRDTFFTLVLIIYLSTLLGNGFMIFLIHFDPNLHTPIYFFLSNLSFLDLCYGTASMPQALVHCFSTHPYLSYPRCLAQTSVSLALATAECLLLAAMAYDRVVAISNPLRYSVVMNGPVCVCLVATSWGTSLVLTAMLILSLRLHFCGANVINHFACEILSLIKLTCSDTSLNEFMILITSIFTLLLPFGFVLLSYIRIAMAIIRIRSLQGRLKAFTTCGSHLTVVTIFYGSAISMYMKTQSKSYPDQDKFISVFYGALTPMLNPLIYSLRKKDVKRAIRKVMLKRT</sequence>
<organism>
    <name type="scientific">Homo sapiens</name>
    <name type="common">Human</name>
    <dbReference type="NCBI Taxonomy" id="9606"/>
    <lineage>
        <taxon>Eukaryota</taxon>
        <taxon>Metazoa</taxon>
        <taxon>Chordata</taxon>
        <taxon>Craniata</taxon>
        <taxon>Vertebrata</taxon>
        <taxon>Euteleostomi</taxon>
        <taxon>Mammalia</taxon>
        <taxon>Eutheria</taxon>
        <taxon>Euarchontoglires</taxon>
        <taxon>Primates</taxon>
        <taxon>Haplorrhini</taxon>
        <taxon>Catarrhini</taxon>
        <taxon>Hominidae</taxon>
        <taxon>Homo</taxon>
    </lineage>
</organism>
<gene>
    <name type="primary">OR13H1</name>
</gene>
<proteinExistence type="evidence at transcript level"/>
<comment type="function">
    <text evidence="4">Odorant receptor.</text>
</comment>
<comment type="subcellular location">
    <subcellularLocation>
        <location>Cell membrane</location>
        <topology>Multi-pass membrane protein</topology>
    </subcellularLocation>
</comment>
<comment type="similarity">
    <text evidence="2">Belongs to the G-protein coupled receptor 1 family.</text>
</comment>
<comment type="online information" name="Human Olfactory Receptor Data Exploratorium (HORDE)">
    <link uri="http://genome.weizmann.ac.il/horde/card/index/symbol:OR13H1"/>
</comment>
<evidence type="ECO:0000255" key="1"/>
<evidence type="ECO:0000255" key="2">
    <source>
        <dbReference type="PROSITE-ProRule" id="PRU00521"/>
    </source>
</evidence>
<evidence type="ECO:0000269" key="3">
    <source>
    </source>
</evidence>
<evidence type="ECO:0000305" key="4"/>
<dbReference type="EMBL" id="AB065938">
    <property type="protein sequence ID" value="BAC06153.1"/>
    <property type="molecule type" value="Genomic_DNA"/>
</dbReference>
<dbReference type="EMBL" id="AL049734">
    <property type="status" value="NOT_ANNOTATED_CDS"/>
    <property type="molecule type" value="Genomic_DNA"/>
</dbReference>
<dbReference type="EMBL" id="BC137050">
    <property type="protein sequence ID" value="AAI37051.1"/>
    <property type="molecule type" value="mRNA"/>
</dbReference>
<dbReference type="EMBL" id="AF399633">
    <property type="protein sequence ID" value="AAK95118.1"/>
    <property type="molecule type" value="Genomic_DNA"/>
</dbReference>
<dbReference type="EMBL" id="BK004524">
    <property type="protein sequence ID" value="DAA04922.1"/>
    <property type="molecule type" value="Genomic_DNA"/>
</dbReference>
<dbReference type="CCDS" id="CCDS35396.1"/>
<dbReference type="RefSeq" id="NP_001004486.1">
    <property type="nucleotide sequence ID" value="NM_001004486.1"/>
</dbReference>
<dbReference type="SMR" id="Q8NG92"/>
<dbReference type="FunCoup" id="Q8NG92">
    <property type="interactions" value="443"/>
</dbReference>
<dbReference type="STRING" id="9606.ENSP00000340748"/>
<dbReference type="GlyCosmos" id="Q8NG92">
    <property type="glycosylation" value="1 site, No reported glycans"/>
</dbReference>
<dbReference type="GlyGen" id="Q8NG92">
    <property type="glycosylation" value="1 site"/>
</dbReference>
<dbReference type="iPTMnet" id="Q8NG92"/>
<dbReference type="PhosphoSitePlus" id="Q8NG92"/>
<dbReference type="BioMuta" id="OR13H1"/>
<dbReference type="DMDM" id="38372645"/>
<dbReference type="MassIVE" id="Q8NG92"/>
<dbReference type="PaxDb" id="9606-ENSP00000340748"/>
<dbReference type="ProteomicsDB" id="73452"/>
<dbReference type="Antibodypedia" id="55967">
    <property type="antibodies" value="32 antibodies from 13 providers"/>
</dbReference>
<dbReference type="DNASU" id="347468"/>
<dbReference type="Ensembl" id="ENST00000338616.6">
    <property type="protein sequence ID" value="ENSP00000340748.3"/>
    <property type="gene ID" value="ENSG00000171054.9"/>
</dbReference>
<dbReference type="GeneID" id="347468"/>
<dbReference type="KEGG" id="hsa:347468"/>
<dbReference type="MANE-Select" id="ENST00000338616.6">
    <property type="protein sequence ID" value="ENSP00000340748.3"/>
    <property type="RefSeq nucleotide sequence ID" value="NM_001004486.1"/>
    <property type="RefSeq protein sequence ID" value="NP_001004486.1"/>
</dbReference>
<dbReference type="UCSC" id="uc011muw.2">
    <property type="organism name" value="human"/>
</dbReference>
<dbReference type="AGR" id="HGNC:14755"/>
<dbReference type="CTD" id="347468"/>
<dbReference type="DisGeNET" id="347468"/>
<dbReference type="GeneCards" id="OR13H1"/>
<dbReference type="HGNC" id="HGNC:14755">
    <property type="gene designation" value="OR13H1"/>
</dbReference>
<dbReference type="HPA" id="ENSG00000171054">
    <property type="expression patterns" value="Not detected"/>
</dbReference>
<dbReference type="neXtProt" id="NX_Q8NG92"/>
<dbReference type="PharmGKB" id="PA32047"/>
<dbReference type="VEuPathDB" id="HostDB:ENSG00000171054"/>
<dbReference type="eggNOG" id="ENOG502SI4A">
    <property type="taxonomic scope" value="Eukaryota"/>
</dbReference>
<dbReference type="GeneTree" id="ENSGT01130000278317"/>
<dbReference type="HOGENOM" id="CLU_012526_0_1_1"/>
<dbReference type="InParanoid" id="Q8NG92"/>
<dbReference type="OMA" id="CYGTVSM"/>
<dbReference type="OrthoDB" id="9018891at2759"/>
<dbReference type="PAN-GO" id="Q8NG92">
    <property type="GO annotations" value="0 GO annotations based on evolutionary models"/>
</dbReference>
<dbReference type="PhylomeDB" id="Q8NG92"/>
<dbReference type="TreeFam" id="TF352686"/>
<dbReference type="PathwayCommons" id="Q8NG92"/>
<dbReference type="Reactome" id="R-HSA-9752946">
    <property type="pathway name" value="Expression and translocation of olfactory receptors"/>
</dbReference>
<dbReference type="BioGRID-ORCS" id="347468">
    <property type="hits" value="14 hits in 372 CRISPR screens"/>
</dbReference>
<dbReference type="GeneWiki" id="OR13H1"/>
<dbReference type="GenomeRNAi" id="347468"/>
<dbReference type="Pharos" id="Q8NG92">
    <property type="development level" value="Tdark"/>
</dbReference>
<dbReference type="PRO" id="PR:Q8NG92"/>
<dbReference type="Proteomes" id="UP000005640">
    <property type="component" value="Chromosome X"/>
</dbReference>
<dbReference type="RNAct" id="Q8NG92">
    <property type="molecule type" value="protein"/>
</dbReference>
<dbReference type="ExpressionAtlas" id="Q8NG92">
    <property type="expression patterns" value="baseline and differential"/>
</dbReference>
<dbReference type="GO" id="GO:0005886">
    <property type="term" value="C:plasma membrane"/>
    <property type="evidence" value="ECO:0000318"/>
    <property type="project" value="GO_Central"/>
</dbReference>
<dbReference type="GO" id="GO:0004930">
    <property type="term" value="F:G protein-coupled receptor activity"/>
    <property type="evidence" value="ECO:0007669"/>
    <property type="project" value="UniProtKB-KW"/>
</dbReference>
<dbReference type="GO" id="GO:0004984">
    <property type="term" value="F:olfactory receptor activity"/>
    <property type="evidence" value="ECO:0000318"/>
    <property type="project" value="GO_Central"/>
</dbReference>
<dbReference type="GO" id="GO:0050911">
    <property type="term" value="P:detection of chemical stimulus involved in sensory perception of smell"/>
    <property type="evidence" value="ECO:0000318"/>
    <property type="project" value="GO_Central"/>
</dbReference>
<dbReference type="CDD" id="cd15431">
    <property type="entry name" value="7tmA_OR13H-like"/>
    <property type="match status" value="1"/>
</dbReference>
<dbReference type="FunFam" id="1.20.1070.10:FF:000008">
    <property type="entry name" value="Olfactory receptor"/>
    <property type="match status" value="1"/>
</dbReference>
<dbReference type="Gene3D" id="1.20.1070.10">
    <property type="entry name" value="Rhodopsin 7-helix transmembrane proteins"/>
    <property type="match status" value="1"/>
</dbReference>
<dbReference type="InterPro" id="IPR000276">
    <property type="entry name" value="GPCR_Rhodpsn"/>
</dbReference>
<dbReference type="InterPro" id="IPR017452">
    <property type="entry name" value="GPCR_Rhodpsn_7TM"/>
</dbReference>
<dbReference type="InterPro" id="IPR000725">
    <property type="entry name" value="Olfact_rcpt"/>
</dbReference>
<dbReference type="PANTHER" id="PTHR26453">
    <property type="entry name" value="OLFACTORY RECEPTOR"/>
    <property type="match status" value="1"/>
</dbReference>
<dbReference type="Pfam" id="PF13853">
    <property type="entry name" value="7tm_4"/>
    <property type="match status" value="1"/>
</dbReference>
<dbReference type="PRINTS" id="PR00237">
    <property type="entry name" value="GPCRRHODOPSN"/>
</dbReference>
<dbReference type="PRINTS" id="PR00245">
    <property type="entry name" value="OLFACTORYR"/>
</dbReference>
<dbReference type="SUPFAM" id="SSF81321">
    <property type="entry name" value="Family A G protein-coupled receptor-like"/>
    <property type="match status" value="1"/>
</dbReference>
<dbReference type="PROSITE" id="PS50262">
    <property type="entry name" value="G_PROTEIN_RECEP_F1_2"/>
    <property type="match status" value="1"/>
</dbReference>
<name>O13H1_HUMAN</name>
<feature type="chain" id="PRO_0000150740" description="Olfactory receptor 13H1">
    <location>
        <begin position="1"/>
        <end position="308"/>
    </location>
</feature>
<feature type="topological domain" description="Extracellular" evidence="1">
    <location>
        <begin position="1"/>
        <end position="25"/>
    </location>
</feature>
<feature type="transmembrane region" description="Helical; Name=1" evidence="1">
    <location>
        <begin position="26"/>
        <end position="46"/>
    </location>
</feature>
<feature type="topological domain" description="Cytoplasmic" evidence="1">
    <location>
        <begin position="47"/>
        <end position="54"/>
    </location>
</feature>
<feature type="transmembrane region" description="Helical; Name=2" evidence="1">
    <location>
        <begin position="55"/>
        <end position="75"/>
    </location>
</feature>
<feature type="topological domain" description="Extracellular" evidence="1">
    <location>
        <begin position="76"/>
        <end position="99"/>
    </location>
</feature>
<feature type="transmembrane region" description="Helical; Name=3" evidence="1">
    <location>
        <begin position="100"/>
        <end position="120"/>
    </location>
</feature>
<feature type="topological domain" description="Cytoplasmic" evidence="1">
    <location>
        <begin position="121"/>
        <end position="139"/>
    </location>
</feature>
<feature type="transmembrane region" description="Helical; Name=4" evidence="1">
    <location>
        <begin position="140"/>
        <end position="159"/>
    </location>
</feature>
<feature type="topological domain" description="Extracellular" evidence="1">
    <location>
        <begin position="160"/>
        <end position="196"/>
    </location>
</feature>
<feature type="transmembrane region" description="Helical; Name=5" evidence="1">
    <location>
        <begin position="197"/>
        <end position="216"/>
    </location>
</feature>
<feature type="topological domain" description="Cytoplasmic" evidence="1">
    <location>
        <begin position="217"/>
        <end position="236"/>
    </location>
</feature>
<feature type="transmembrane region" description="Helical; Name=6" evidence="1">
    <location>
        <begin position="237"/>
        <end position="257"/>
    </location>
</feature>
<feature type="topological domain" description="Extracellular" evidence="1">
    <location>
        <begin position="258"/>
        <end position="270"/>
    </location>
</feature>
<feature type="transmembrane region" description="Helical; Name=7" evidence="1">
    <location>
        <begin position="271"/>
        <end position="291"/>
    </location>
</feature>
<feature type="topological domain" description="Cytoplasmic" evidence="1">
    <location>
        <begin position="292"/>
        <end position="308"/>
    </location>
</feature>
<feature type="glycosylation site" description="N-linked (GlcNAc...) asparagine" evidence="1">
    <location>
        <position position="5"/>
    </location>
</feature>
<feature type="disulfide bond" evidence="2">
    <location>
        <begin position="97"/>
        <end position="188"/>
    </location>
</feature>
<feature type="sequence variant" id="VAR_034312" description="In dbSNP:rs655415." evidence="3">
    <original>Y</original>
    <variation>S</variation>
    <location>
        <position position="266"/>
    </location>
</feature>